<feature type="chain" id="PRO_0000046435" description="DNA polymerase alpha catalytic subunit">
    <location>
        <begin position="1"/>
        <end position="1513"/>
    </location>
</feature>
<feature type="zinc finger region" description="CysA-type">
    <location>
        <begin position="1344"/>
        <end position="1373"/>
    </location>
</feature>
<feature type="region of interest" description="Disordered" evidence="2">
    <location>
        <begin position="235"/>
        <end position="254"/>
    </location>
</feature>
<feature type="short sequence motif" description="CysB motif">
    <location>
        <begin position="1404"/>
        <end position="1427"/>
    </location>
</feature>
<feature type="binding site" evidence="1">
    <location>
        <position position="1344"/>
    </location>
    <ligand>
        <name>Zn(2+)</name>
        <dbReference type="ChEBI" id="CHEBI:29105"/>
        <label>1</label>
    </ligand>
</feature>
<feature type="binding site" evidence="1">
    <location>
        <position position="1347"/>
    </location>
    <ligand>
        <name>Zn(2+)</name>
        <dbReference type="ChEBI" id="CHEBI:29105"/>
        <label>1</label>
    </ligand>
</feature>
<feature type="binding site" evidence="1">
    <location>
        <position position="1370"/>
    </location>
    <ligand>
        <name>Zn(2+)</name>
        <dbReference type="ChEBI" id="CHEBI:29105"/>
        <label>1</label>
    </ligand>
</feature>
<feature type="binding site" evidence="1">
    <location>
        <position position="1373"/>
    </location>
    <ligand>
        <name>Zn(2+)</name>
        <dbReference type="ChEBI" id="CHEBI:29105"/>
        <label>1</label>
    </ligand>
</feature>
<feature type="binding site" evidence="1">
    <location>
        <position position="1404"/>
    </location>
    <ligand>
        <name>Zn(2+)</name>
        <dbReference type="ChEBI" id="CHEBI:29105"/>
        <label>2</label>
    </ligand>
</feature>
<feature type="binding site" evidence="1">
    <location>
        <position position="1409"/>
    </location>
    <ligand>
        <name>Zn(2+)</name>
        <dbReference type="ChEBI" id="CHEBI:29105"/>
        <label>2</label>
    </ligand>
</feature>
<feature type="binding site" evidence="1">
    <location>
        <position position="1422"/>
    </location>
    <ligand>
        <name>Zn(2+)</name>
        <dbReference type="ChEBI" id="CHEBI:29105"/>
        <label>2</label>
    </ligand>
</feature>
<feature type="binding site" evidence="1">
    <location>
        <position position="1427"/>
    </location>
    <ligand>
        <name>Zn(2+)</name>
        <dbReference type="ChEBI" id="CHEBI:29105"/>
        <label>2</label>
    </ligand>
</feature>
<keyword id="KW-0235">DNA replication</keyword>
<keyword id="KW-0238">DNA-binding</keyword>
<keyword id="KW-0239">DNA-directed DNA polymerase</keyword>
<keyword id="KW-0479">Metal-binding</keyword>
<keyword id="KW-0548">Nucleotidyltransferase</keyword>
<keyword id="KW-0539">Nucleus</keyword>
<keyword id="KW-0808">Transferase</keyword>
<keyword id="KW-0862">Zinc</keyword>
<keyword id="KW-0863">Zinc-finger</keyword>
<dbReference type="EC" id="2.7.7.7"/>
<dbReference type="EMBL" id="U59426">
    <property type="protein sequence ID" value="AAB57771.1"/>
    <property type="molecule type" value="Genomic_DNA"/>
</dbReference>
<dbReference type="PIR" id="T28158">
    <property type="entry name" value="T28158"/>
</dbReference>
<dbReference type="SMR" id="Q27152"/>
<dbReference type="GO" id="GO:0005658">
    <property type="term" value="C:alpha DNA polymerase:primase complex"/>
    <property type="evidence" value="ECO:0007669"/>
    <property type="project" value="TreeGrafter"/>
</dbReference>
<dbReference type="GO" id="GO:0003682">
    <property type="term" value="F:chromatin binding"/>
    <property type="evidence" value="ECO:0007669"/>
    <property type="project" value="TreeGrafter"/>
</dbReference>
<dbReference type="GO" id="GO:0003688">
    <property type="term" value="F:DNA replication origin binding"/>
    <property type="evidence" value="ECO:0007669"/>
    <property type="project" value="TreeGrafter"/>
</dbReference>
<dbReference type="GO" id="GO:0003887">
    <property type="term" value="F:DNA-directed DNA polymerase activity"/>
    <property type="evidence" value="ECO:0007669"/>
    <property type="project" value="UniProtKB-KW"/>
</dbReference>
<dbReference type="GO" id="GO:0000166">
    <property type="term" value="F:nucleotide binding"/>
    <property type="evidence" value="ECO:0007669"/>
    <property type="project" value="InterPro"/>
</dbReference>
<dbReference type="GO" id="GO:0003697">
    <property type="term" value="F:single-stranded DNA binding"/>
    <property type="evidence" value="ECO:0007669"/>
    <property type="project" value="TreeGrafter"/>
</dbReference>
<dbReference type="GO" id="GO:0008270">
    <property type="term" value="F:zinc ion binding"/>
    <property type="evidence" value="ECO:0007669"/>
    <property type="project" value="UniProtKB-KW"/>
</dbReference>
<dbReference type="GO" id="GO:0006273">
    <property type="term" value="P:lagging strand elongation"/>
    <property type="evidence" value="ECO:0007669"/>
    <property type="project" value="TreeGrafter"/>
</dbReference>
<dbReference type="GO" id="GO:0006272">
    <property type="term" value="P:leading strand elongation"/>
    <property type="evidence" value="ECO:0007669"/>
    <property type="project" value="TreeGrafter"/>
</dbReference>
<dbReference type="GO" id="GO:1902975">
    <property type="term" value="P:mitotic DNA replication initiation"/>
    <property type="evidence" value="ECO:0007669"/>
    <property type="project" value="InterPro"/>
</dbReference>
<dbReference type="CDD" id="cd05776">
    <property type="entry name" value="DNA_polB_alpha_exo"/>
    <property type="match status" value="1"/>
</dbReference>
<dbReference type="CDD" id="cd05532">
    <property type="entry name" value="POLBc_alpha"/>
    <property type="match status" value="1"/>
</dbReference>
<dbReference type="FunFam" id="1.10.132.60:FF:000004">
    <property type="entry name" value="DNA polymerase"/>
    <property type="match status" value="1"/>
</dbReference>
<dbReference type="Gene3D" id="2.40.50.730">
    <property type="match status" value="1"/>
</dbReference>
<dbReference type="Gene3D" id="3.30.70.2820">
    <property type="match status" value="1"/>
</dbReference>
<dbReference type="Gene3D" id="6.10.10.100">
    <property type="match status" value="1"/>
</dbReference>
<dbReference type="Gene3D" id="1.10.3200.20">
    <property type="entry name" value="DNA Polymerase alpha, zinc finger"/>
    <property type="match status" value="1"/>
</dbReference>
<dbReference type="Gene3D" id="1.10.132.60">
    <property type="entry name" value="DNA polymerase family B, C-terminal domain"/>
    <property type="match status" value="1"/>
</dbReference>
<dbReference type="Gene3D" id="1.10.287.690">
    <property type="entry name" value="Helix hairpin bin"/>
    <property type="match status" value="1"/>
</dbReference>
<dbReference type="Gene3D" id="3.90.1600.10">
    <property type="entry name" value="Palm domain of DNA polymerase"/>
    <property type="match status" value="1"/>
</dbReference>
<dbReference type="Gene3D" id="3.30.420.10">
    <property type="entry name" value="Ribonuclease H-like superfamily/Ribonuclease H"/>
    <property type="match status" value="1"/>
</dbReference>
<dbReference type="InterPro" id="IPR006172">
    <property type="entry name" value="DNA-dir_DNA_pol_B"/>
</dbReference>
<dbReference type="InterPro" id="IPR017964">
    <property type="entry name" value="DNA-dir_DNA_pol_B_CS"/>
</dbReference>
<dbReference type="InterPro" id="IPR006133">
    <property type="entry name" value="DNA-dir_DNA_pol_B_exonuc"/>
</dbReference>
<dbReference type="InterPro" id="IPR006134">
    <property type="entry name" value="DNA-dir_DNA_pol_B_multi_dom"/>
</dbReference>
<dbReference type="InterPro" id="IPR043502">
    <property type="entry name" value="DNA/RNA_pol_sf"/>
</dbReference>
<dbReference type="InterPro" id="IPR024647">
    <property type="entry name" value="DNA_pol_a_cat_su_N"/>
</dbReference>
<dbReference type="InterPro" id="IPR042087">
    <property type="entry name" value="DNA_pol_B_thumb"/>
</dbReference>
<dbReference type="InterPro" id="IPR023211">
    <property type="entry name" value="DNA_pol_palm_dom_sf"/>
</dbReference>
<dbReference type="InterPro" id="IPR038256">
    <property type="entry name" value="Pol_alpha_znc_sf"/>
</dbReference>
<dbReference type="InterPro" id="IPR045846">
    <property type="entry name" value="POLBc_alpha"/>
</dbReference>
<dbReference type="InterPro" id="IPR012337">
    <property type="entry name" value="RNaseH-like_sf"/>
</dbReference>
<dbReference type="InterPro" id="IPR036397">
    <property type="entry name" value="RNaseH_sf"/>
</dbReference>
<dbReference type="InterPro" id="IPR015088">
    <property type="entry name" value="Znf_DNA-dir_DNA_pol_B_alpha"/>
</dbReference>
<dbReference type="NCBIfam" id="TIGR00592">
    <property type="entry name" value="pol2"/>
    <property type="match status" value="1"/>
</dbReference>
<dbReference type="PANTHER" id="PTHR45861">
    <property type="entry name" value="DNA POLYMERASE ALPHA CATALYTIC SUBUNIT"/>
    <property type="match status" value="1"/>
</dbReference>
<dbReference type="PANTHER" id="PTHR45861:SF1">
    <property type="entry name" value="DNA POLYMERASE ALPHA CATALYTIC SUBUNIT"/>
    <property type="match status" value="1"/>
</dbReference>
<dbReference type="Pfam" id="PF12254">
    <property type="entry name" value="DNA_pol_alpha_N"/>
    <property type="match status" value="1"/>
</dbReference>
<dbReference type="Pfam" id="PF00136">
    <property type="entry name" value="DNA_pol_B"/>
    <property type="match status" value="1"/>
</dbReference>
<dbReference type="Pfam" id="PF03104">
    <property type="entry name" value="DNA_pol_B_exo1"/>
    <property type="match status" value="1"/>
</dbReference>
<dbReference type="Pfam" id="PF08996">
    <property type="entry name" value="zf-DNA_Pol"/>
    <property type="match status" value="1"/>
</dbReference>
<dbReference type="PRINTS" id="PR00106">
    <property type="entry name" value="DNAPOLB"/>
</dbReference>
<dbReference type="SMART" id="SM00486">
    <property type="entry name" value="POLBc"/>
    <property type="match status" value="1"/>
</dbReference>
<dbReference type="SUPFAM" id="SSF56672">
    <property type="entry name" value="DNA/RNA polymerases"/>
    <property type="match status" value="1"/>
</dbReference>
<dbReference type="SUPFAM" id="SSF53098">
    <property type="entry name" value="Ribonuclease H-like"/>
    <property type="match status" value="1"/>
</dbReference>
<dbReference type="PROSITE" id="PS00116">
    <property type="entry name" value="DNA_POLYMERASE_B"/>
    <property type="match status" value="1"/>
</dbReference>
<reference key="1">
    <citation type="journal article" date="1997" name="J. Mol. Evol.">
        <title>Phylogenetic relationships among hypotrichous ciliates determined with the macronuclear gene encoding the large, catalytic subunit of DNA polymerase alpha.</title>
        <authorList>
            <person name="Hoffman D.C."/>
            <person name="Prescott D.M."/>
        </authorList>
    </citation>
    <scope>NUCLEOTIDE SEQUENCE [GENOMIC DNA]</scope>
</reference>
<comment type="function">
    <text>Polymerase alpha in a complex with DNA primase is a replicative polymerase.</text>
</comment>
<comment type="catalytic activity">
    <reaction>
        <text>DNA(n) + a 2'-deoxyribonucleoside 5'-triphosphate = DNA(n+1) + diphosphate</text>
        <dbReference type="Rhea" id="RHEA:22508"/>
        <dbReference type="Rhea" id="RHEA-COMP:17339"/>
        <dbReference type="Rhea" id="RHEA-COMP:17340"/>
        <dbReference type="ChEBI" id="CHEBI:33019"/>
        <dbReference type="ChEBI" id="CHEBI:61560"/>
        <dbReference type="ChEBI" id="CHEBI:173112"/>
        <dbReference type="EC" id="2.7.7.7"/>
    </reaction>
</comment>
<comment type="subcellular location">
    <subcellularLocation>
        <location>Nucleus</location>
    </subcellularLocation>
</comment>
<comment type="miscellaneous">
    <text>In eukaryotes there are five DNA polymerases: alpha, beta, gamma, delta, and epsilon which are responsible for different reactions of DNA synthesis.</text>
</comment>
<comment type="similarity">
    <text evidence="3">Belongs to the DNA polymerase type-B family.</text>
</comment>
<organism>
    <name type="scientific">Oxytricha trifallax</name>
    <name type="common">Sterkiella histriomuscorum</name>
    <dbReference type="NCBI Taxonomy" id="94289"/>
    <lineage>
        <taxon>Eukaryota</taxon>
        <taxon>Sar</taxon>
        <taxon>Alveolata</taxon>
        <taxon>Ciliophora</taxon>
        <taxon>Intramacronucleata</taxon>
        <taxon>Spirotrichea</taxon>
        <taxon>Stichotrichia</taxon>
        <taxon>Sporadotrichida</taxon>
        <taxon>Oxytrichidae</taxon>
        <taxon>Stylonychinae</taxon>
        <taxon>Sterkiella</taxon>
    </lineage>
</organism>
<name>DPOLA_OXYTR</name>
<accession>Q27152</accession>
<proteinExistence type="inferred from homology"/>
<sequence>MFHLLLENEEIQFSNSFAQFYLQVDEAKKIFDEIDDDEYDKIQDQRKNDDFIVDDDGYGYRDHGGEIWERDDHPEDGGKKKKKSSMYVFSFSPKFIAQPLFLQPNEQSITAFMKPKSTINRPGAVTNSSAQIKQKPKVSAEQSKDIMNNLFQELDSKDVDELQDVNNSAVVTELNKPIAFNQNDMLTSKYAVTLETRQEVEQKRVTEQIQAQAQIGQNQQSSNPFSKKRKFEEISTNQNANASDSKRVSNQTNDNLNKVETQVISMLKVANPQIKVTSKLARMDDSMKIDQTSAQKNQIEQTVNHSKLQRYNQNQMMSGIKLDNRTSKPIRNLEIWNQVLANTQEFPLPLNENGTLSFYWIDAHEENNGTDLYIFGKIYQPQMRQFVSCSMKVNGMQRELYALPKMRGKARGALTVEEEKQQVRAVMMELDDIRKKRFPQISKWRCKPVNRKYAFEMPIQHGEHQFLKIKYDSTMPPLPSTIQGNTFECIFGSTQSMLELFILKRKIRGPCWMTIKNPTKVTDFKKTWCRQGIVIDNPKNVEVTLEDLNKQELPPLTSLTFSFKTTRAQQNTNEIAMISCLINTNIAQEGPSQVERTQSFTLLRKLDGKPMPYDFDQKVKQRKENIIQKFENERQMIEAFIAKVFIVDPDLVVAHNLCGGMFDLLLARIQYLKVNHWSRIGRLKKTQIPNKKLDFGGSSYGGSQWIPRQVTCGRLLVDTFLSAKELVRETSYDLTYLAKVQLKKDRQDFDDELLPTLYITSERLFSLIDHTEKDAYLTIQLMNHLAIIPLTLQLTNIAGNLWFRSLQNARAERNEMLLLHEFKKKKFILPDKKAPFAKDFKRNMFADEFEELKSGKGPKKGGKRKKAAYAGGLVIEPKAGFYDNIILLLDFNSLYPSIIQEYNLCFTTVNRRPTKNFDGSEVKSQFKAAGTDANEGNEVEEADLPDKNVNVKDAVLPNVLRDLVQKRKAVKEKMKNEKDAVKLSQLEIRQKAIKLTANSMYGCLGFGSSRFHAQAIAALITKTGRDTLLRTKDIAENKLGFNVVYGDTDSIMINTGTNQLQQSLEMGKRPQGLKLIALYKCLEIEIDGVFKSLLLLKKKKYAALKYEGFGTPDAKVVQEVKGLDMVRRDWCPLSKNVGNFVLNQILSGKQREDVVLNLNEYLSDIGEKMKNNGITLDQFIITKQLTKAISEYSDIKGQPHVAVAQRLKNQGKSESDLVNNFIPYVIGAQPFDPSKTNPALAGKAYHPEEVVSSKGKILLDIEWYITMQVLPPITRLIEHIDGIDVEFVAQCLGVDPKKYKYHSSEKKTGETNNDDGTLIQNPILQTETERSLKGRTIAELTIKCPHCSESYHFPGIFQDGKNNTLSGLLCIKCTQPIPEAYIQNRVTLFLKQLLTLYYQGNKQCQEPACGAVSRQLLYNNKCINLACKLKNDTRYTEQKTNDTLRYLQGLFNVKKYIQENQKNGCVHKTVEEVPNFDAFARMQGKVDDIMIRSKYNKVDLSSIFNFMKLGKQQ</sequence>
<protein>
    <recommendedName>
        <fullName>DNA polymerase alpha catalytic subunit</fullName>
        <ecNumber>2.7.7.7</ecNumber>
    </recommendedName>
</protein>
<evidence type="ECO:0000250" key="1">
    <source>
        <dbReference type="UniProtKB" id="P13382"/>
    </source>
</evidence>
<evidence type="ECO:0000256" key="2">
    <source>
        <dbReference type="SAM" id="MobiDB-lite"/>
    </source>
</evidence>
<evidence type="ECO:0000305" key="3"/>